<name>CAPA_STAAR</name>
<proteinExistence type="inferred from homology"/>
<feature type="chain" id="PRO_0000217220" description="Capsular polysaccharide biosynthesis protein CapA">
    <location>
        <begin position="1"/>
        <end position="220"/>
    </location>
</feature>
<feature type="transmembrane region" description="Helical" evidence="2">
    <location>
        <begin position="20"/>
        <end position="40"/>
    </location>
</feature>
<feature type="transmembrane region" description="Helical" evidence="2">
    <location>
        <begin position="171"/>
        <end position="191"/>
    </location>
</feature>
<protein>
    <recommendedName>
        <fullName>Capsular polysaccharide biosynthesis protein CapA</fullName>
    </recommendedName>
</protein>
<sequence length="220" mass="24368">MKEKFDLVKLLNILKKNIKLLLILPAICLVVSAALTFFVMPDKYTASTQILVNMKKSSSDLAFQNVQSSLQSVNTYTEIIKSPRILDKVSREFDGQYSTAELNSFLKVTNQTNSQIITVSVTTGNKSESDKIVNRISKVFAHDMPKIMSVDNVTILSSAHDNAVKVSPIVSVNLVISIIVGIVLAILIIFLKELLDKRIKTEEDVESQLGLPILGSIQKF</sequence>
<comment type="function">
    <text evidence="1">Required for the biosynthesis of type 1 capsular polysaccharide.</text>
</comment>
<comment type="pathway">
    <text>Capsule biogenesis; capsule polysaccharide biosynthesis.</text>
</comment>
<comment type="subcellular location">
    <subcellularLocation>
        <location evidence="3">Cell membrane</location>
        <topology evidence="3">Multi-pass membrane protein</topology>
    </subcellularLocation>
</comment>
<comment type="similarity">
    <text evidence="3">Belongs to the CpsC/CapA family.</text>
</comment>
<accession>Q6GDE0</accession>
<evidence type="ECO:0000250" key="1"/>
<evidence type="ECO:0000255" key="2"/>
<evidence type="ECO:0000305" key="3"/>
<reference key="1">
    <citation type="journal article" date="2004" name="Proc. Natl. Acad. Sci. U.S.A.">
        <title>Complete genomes of two clinical Staphylococcus aureus strains: evidence for the rapid evolution of virulence and drug resistance.</title>
        <authorList>
            <person name="Holden M.T.G."/>
            <person name="Feil E.J."/>
            <person name="Lindsay J.A."/>
            <person name="Peacock S.J."/>
            <person name="Day N.P.J."/>
            <person name="Enright M.C."/>
            <person name="Foster T.J."/>
            <person name="Moore C.E."/>
            <person name="Hurst L."/>
            <person name="Atkin R."/>
            <person name="Barron A."/>
            <person name="Bason N."/>
            <person name="Bentley S.D."/>
            <person name="Chillingworth C."/>
            <person name="Chillingworth T."/>
            <person name="Churcher C."/>
            <person name="Clark L."/>
            <person name="Corton C."/>
            <person name="Cronin A."/>
            <person name="Doggett J."/>
            <person name="Dowd L."/>
            <person name="Feltwell T."/>
            <person name="Hance Z."/>
            <person name="Harris B."/>
            <person name="Hauser H."/>
            <person name="Holroyd S."/>
            <person name="Jagels K."/>
            <person name="James K.D."/>
            <person name="Lennard N."/>
            <person name="Line A."/>
            <person name="Mayes R."/>
            <person name="Moule S."/>
            <person name="Mungall K."/>
            <person name="Ormond D."/>
            <person name="Quail M.A."/>
            <person name="Rabbinowitsch E."/>
            <person name="Rutherford K.M."/>
            <person name="Sanders M."/>
            <person name="Sharp S."/>
            <person name="Simmonds M."/>
            <person name="Stevens K."/>
            <person name="Whitehead S."/>
            <person name="Barrell B.G."/>
            <person name="Spratt B.G."/>
            <person name="Parkhill J."/>
        </authorList>
    </citation>
    <scope>NUCLEOTIDE SEQUENCE [LARGE SCALE GENOMIC DNA]</scope>
    <source>
        <strain>MRSA252</strain>
    </source>
</reference>
<dbReference type="EMBL" id="BX571856">
    <property type="protein sequence ID" value="CAG41721.1"/>
    <property type="molecule type" value="Genomic_DNA"/>
</dbReference>
<dbReference type="RefSeq" id="WP_000659677.1">
    <property type="nucleotide sequence ID" value="NC_002952.2"/>
</dbReference>
<dbReference type="SMR" id="Q6GDE0"/>
<dbReference type="KEGG" id="sar:SAR2745"/>
<dbReference type="HOGENOM" id="CLU_082668_1_1_9"/>
<dbReference type="UniPathway" id="UPA00934"/>
<dbReference type="Proteomes" id="UP000000596">
    <property type="component" value="Chromosome"/>
</dbReference>
<dbReference type="GO" id="GO:0005886">
    <property type="term" value="C:plasma membrane"/>
    <property type="evidence" value="ECO:0007669"/>
    <property type="project" value="UniProtKB-SubCell"/>
</dbReference>
<dbReference type="GO" id="GO:0004713">
    <property type="term" value="F:protein tyrosine kinase activity"/>
    <property type="evidence" value="ECO:0007669"/>
    <property type="project" value="TreeGrafter"/>
</dbReference>
<dbReference type="GO" id="GO:0045227">
    <property type="term" value="P:capsule polysaccharide biosynthetic process"/>
    <property type="evidence" value="ECO:0007669"/>
    <property type="project" value="UniProtKB-UniPathway"/>
</dbReference>
<dbReference type="InterPro" id="IPR050445">
    <property type="entry name" value="Bact_polysacc_biosynth/exp"/>
</dbReference>
<dbReference type="InterPro" id="IPR003856">
    <property type="entry name" value="LPS_length_determ_N_term"/>
</dbReference>
<dbReference type="PANTHER" id="PTHR32309:SF13">
    <property type="entry name" value="FERRIC ENTEROBACTIN TRANSPORT PROTEIN FEPE"/>
    <property type="match status" value="1"/>
</dbReference>
<dbReference type="PANTHER" id="PTHR32309">
    <property type="entry name" value="TYROSINE-PROTEIN KINASE"/>
    <property type="match status" value="1"/>
</dbReference>
<dbReference type="Pfam" id="PF02706">
    <property type="entry name" value="Wzz"/>
    <property type="match status" value="1"/>
</dbReference>
<gene>
    <name type="primary">capA</name>
    <name type="ordered locus">SAR2745</name>
</gene>
<keyword id="KW-0972">Capsule biogenesis/degradation</keyword>
<keyword id="KW-1003">Cell membrane</keyword>
<keyword id="KW-0270">Exopolysaccharide synthesis</keyword>
<keyword id="KW-0472">Membrane</keyword>
<keyword id="KW-0812">Transmembrane</keyword>
<keyword id="KW-1133">Transmembrane helix</keyword>
<organism>
    <name type="scientific">Staphylococcus aureus (strain MRSA252)</name>
    <dbReference type="NCBI Taxonomy" id="282458"/>
    <lineage>
        <taxon>Bacteria</taxon>
        <taxon>Bacillati</taxon>
        <taxon>Bacillota</taxon>
        <taxon>Bacilli</taxon>
        <taxon>Bacillales</taxon>
        <taxon>Staphylococcaceae</taxon>
        <taxon>Staphylococcus</taxon>
    </lineage>
</organism>